<comment type="function">
    <text evidence="3">Accessory subunit of the mitochondrial membrane respiratory chain NADH dehydrogenase (Complex I), that is believed not to be involved in catalysis. Complex I functions in the transfer of electrons from NADH to the respiratory chain. The immediate electron acceptor for the enzyme is believed to be ubiquinone.</text>
</comment>
<comment type="subunit">
    <text evidence="3">Complex I is composed of 45 different subunits.</text>
</comment>
<comment type="subcellular location">
    <subcellularLocation>
        <location evidence="3">Mitochondrion inner membrane</location>
        <topology evidence="2">Single-pass membrane protein</topology>
        <orientation evidence="3">Matrix side</orientation>
    </subcellularLocation>
</comment>
<comment type="similarity">
    <text evidence="4">Belongs to the complex I NDUFB8 subunit family.</text>
</comment>
<reference key="1">
    <citation type="journal article" date="2005" name="Science">
        <title>The transcriptional landscape of the mammalian genome.</title>
        <authorList>
            <person name="Carninci P."/>
            <person name="Kasukawa T."/>
            <person name="Katayama S."/>
            <person name="Gough J."/>
            <person name="Frith M.C."/>
            <person name="Maeda N."/>
            <person name="Oyama R."/>
            <person name="Ravasi T."/>
            <person name="Lenhard B."/>
            <person name="Wells C."/>
            <person name="Kodzius R."/>
            <person name="Shimokawa K."/>
            <person name="Bajic V.B."/>
            <person name="Brenner S.E."/>
            <person name="Batalov S."/>
            <person name="Forrest A.R."/>
            <person name="Zavolan M."/>
            <person name="Davis M.J."/>
            <person name="Wilming L.G."/>
            <person name="Aidinis V."/>
            <person name="Allen J.E."/>
            <person name="Ambesi-Impiombato A."/>
            <person name="Apweiler R."/>
            <person name="Aturaliya R.N."/>
            <person name="Bailey T.L."/>
            <person name="Bansal M."/>
            <person name="Baxter L."/>
            <person name="Beisel K.W."/>
            <person name="Bersano T."/>
            <person name="Bono H."/>
            <person name="Chalk A.M."/>
            <person name="Chiu K.P."/>
            <person name="Choudhary V."/>
            <person name="Christoffels A."/>
            <person name="Clutterbuck D.R."/>
            <person name="Crowe M.L."/>
            <person name="Dalla E."/>
            <person name="Dalrymple B.P."/>
            <person name="de Bono B."/>
            <person name="Della Gatta G."/>
            <person name="di Bernardo D."/>
            <person name="Down T."/>
            <person name="Engstrom P."/>
            <person name="Fagiolini M."/>
            <person name="Faulkner G."/>
            <person name="Fletcher C.F."/>
            <person name="Fukushima T."/>
            <person name="Furuno M."/>
            <person name="Futaki S."/>
            <person name="Gariboldi M."/>
            <person name="Georgii-Hemming P."/>
            <person name="Gingeras T.R."/>
            <person name="Gojobori T."/>
            <person name="Green R.E."/>
            <person name="Gustincich S."/>
            <person name="Harbers M."/>
            <person name="Hayashi Y."/>
            <person name="Hensch T.K."/>
            <person name="Hirokawa N."/>
            <person name="Hill D."/>
            <person name="Huminiecki L."/>
            <person name="Iacono M."/>
            <person name="Ikeo K."/>
            <person name="Iwama A."/>
            <person name="Ishikawa T."/>
            <person name="Jakt M."/>
            <person name="Kanapin A."/>
            <person name="Katoh M."/>
            <person name="Kawasawa Y."/>
            <person name="Kelso J."/>
            <person name="Kitamura H."/>
            <person name="Kitano H."/>
            <person name="Kollias G."/>
            <person name="Krishnan S.P."/>
            <person name="Kruger A."/>
            <person name="Kummerfeld S.K."/>
            <person name="Kurochkin I.V."/>
            <person name="Lareau L.F."/>
            <person name="Lazarevic D."/>
            <person name="Lipovich L."/>
            <person name="Liu J."/>
            <person name="Liuni S."/>
            <person name="McWilliam S."/>
            <person name="Madan Babu M."/>
            <person name="Madera M."/>
            <person name="Marchionni L."/>
            <person name="Matsuda H."/>
            <person name="Matsuzawa S."/>
            <person name="Miki H."/>
            <person name="Mignone F."/>
            <person name="Miyake S."/>
            <person name="Morris K."/>
            <person name="Mottagui-Tabar S."/>
            <person name="Mulder N."/>
            <person name="Nakano N."/>
            <person name="Nakauchi H."/>
            <person name="Ng P."/>
            <person name="Nilsson R."/>
            <person name="Nishiguchi S."/>
            <person name="Nishikawa S."/>
            <person name="Nori F."/>
            <person name="Ohara O."/>
            <person name="Okazaki Y."/>
            <person name="Orlando V."/>
            <person name="Pang K.C."/>
            <person name="Pavan W.J."/>
            <person name="Pavesi G."/>
            <person name="Pesole G."/>
            <person name="Petrovsky N."/>
            <person name="Piazza S."/>
            <person name="Reed J."/>
            <person name="Reid J.F."/>
            <person name="Ring B.Z."/>
            <person name="Ringwald M."/>
            <person name="Rost B."/>
            <person name="Ruan Y."/>
            <person name="Salzberg S.L."/>
            <person name="Sandelin A."/>
            <person name="Schneider C."/>
            <person name="Schoenbach C."/>
            <person name="Sekiguchi K."/>
            <person name="Semple C.A."/>
            <person name="Seno S."/>
            <person name="Sessa L."/>
            <person name="Sheng Y."/>
            <person name="Shibata Y."/>
            <person name="Shimada H."/>
            <person name="Shimada K."/>
            <person name="Silva D."/>
            <person name="Sinclair B."/>
            <person name="Sperling S."/>
            <person name="Stupka E."/>
            <person name="Sugiura K."/>
            <person name="Sultana R."/>
            <person name="Takenaka Y."/>
            <person name="Taki K."/>
            <person name="Tammoja K."/>
            <person name="Tan S.L."/>
            <person name="Tang S."/>
            <person name="Taylor M.S."/>
            <person name="Tegner J."/>
            <person name="Teichmann S.A."/>
            <person name="Ueda H.R."/>
            <person name="van Nimwegen E."/>
            <person name="Verardo R."/>
            <person name="Wei C.L."/>
            <person name="Yagi K."/>
            <person name="Yamanishi H."/>
            <person name="Zabarovsky E."/>
            <person name="Zhu S."/>
            <person name="Zimmer A."/>
            <person name="Hide W."/>
            <person name="Bult C."/>
            <person name="Grimmond S.M."/>
            <person name="Teasdale R.D."/>
            <person name="Liu E.T."/>
            <person name="Brusic V."/>
            <person name="Quackenbush J."/>
            <person name="Wahlestedt C."/>
            <person name="Mattick J.S."/>
            <person name="Hume D.A."/>
            <person name="Kai C."/>
            <person name="Sasaki D."/>
            <person name="Tomaru Y."/>
            <person name="Fukuda S."/>
            <person name="Kanamori-Katayama M."/>
            <person name="Suzuki M."/>
            <person name="Aoki J."/>
            <person name="Arakawa T."/>
            <person name="Iida J."/>
            <person name="Imamura K."/>
            <person name="Itoh M."/>
            <person name="Kato T."/>
            <person name="Kawaji H."/>
            <person name="Kawagashira N."/>
            <person name="Kawashima T."/>
            <person name="Kojima M."/>
            <person name="Kondo S."/>
            <person name="Konno H."/>
            <person name="Nakano K."/>
            <person name="Ninomiya N."/>
            <person name="Nishio T."/>
            <person name="Okada M."/>
            <person name="Plessy C."/>
            <person name="Shibata K."/>
            <person name="Shiraki T."/>
            <person name="Suzuki S."/>
            <person name="Tagami M."/>
            <person name="Waki K."/>
            <person name="Watahiki A."/>
            <person name="Okamura-Oho Y."/>
            <person name="Suzuki H."/>
            <person name="Kawai J."/>
            <person name="Hayashizaki Y."/>
        </authorList>
    </citation>
    <scope>NUCLEOTIDE SEQUENCE [LARGE SCALE MRNA]</scope>
    <source>
        <strain>C57BL/6J</strain>
        <tissue>Hippocampus</tissue>
        <tissue>Tongue</tissue>
    </source>
</reference>
<reference key="2">
    <citation type="journal article" date="2004" name="Genome Res.">
        <title>The status, quality, and expansion of the NIH full-length cDNA project: the Mammalian Gene Collection (MGC).</title>
        <authorList>
            <consortium name="The MGC Project Team"/>
        </authorList>
    </citation>
    <scope>NUCLEOTIDE SEQUENCE [LARGE SCALE MRNA]</scope>
    <source>
        <strain>C57BL/6J</strain>
        <tissue>Brain</tissue>
    </source>
</reference>
<reference key="3">
    <citation type="submission" date="2007-04" db="UniProtKB">
        <authorList>
            <person name="Lubec G."/>
            <person name="Kang S.U."/>
        </authorList>
    </citation>
    <scope>PROTEIN SEQUENCE OF 35-43; 87-98 AND 160-186</scope>
    <scope>IDENTIFICATION BY MASS SPECTROMETRY</scope>
    <source>
        <strain>C57BL/6J</strain>
        <tissue>Brain</tissue>
    </source>
</reference>
<reference key="4">
    <citation type="journal article" date="2010" name="Cell">
        <title>A tissue-specific atlas of mouse protein phosphorylation and expression.</title>
        <authorList>
            <person name="Huttlin E.L."/>
            <person name="Jedrychowski M.P."/>
            <person name="Elias J.E."/>
            <person name="Goswami T."/>
            <person name="Rad R."/>
            <person name="Beausoleil S.A."/>
            <person name="Villen J."/>
            <person name="Haas W."/>
            <person name="Sowa M.E."/>
            <person name="Gygi S.P."/>
        </authorList>
    </citation>
    <scope>IDENTIFICATION BY MASS SPECTROMETRY [LARGE SCALE ANALYSIS]</scope>
    <source>
        <tissue>Brain</tissue>
        <tissue>Brown adipose tissue</tissue>
        <tissue>Heart</tissue>
        <tissue>Kidney</tissue>
        <tissue>Liver</tissue>
        <tissue>Lung</tissue>
        <tissue>Pancreas</tissue>
        <tissue>Spleen</tissue>
        <tissue>Testis</tissue>
    </source>
</reference>
<reference evidence="5" key="5">
    <citation type="journal article" date="2024" name="Nat. Struct. Mol. Biol.">
        <title>SCAF1 drives the compositional diversity of mammalian respirasomes.</title>
        <authorList>
            <person name="Vercellino I."/>
            <person name="Sazanov L.A."/>
        </authorList>
    </citation>
    <scope>STRUCTURE BY ELECTRON MICROSCOPY (3.60 ANGSTROMS) IN COMPLEX WITH MITOCHONDRIAL RESPIRATORY SUPERCOMPLEX</scope>
    <scope>FUNCTION</scope>
    <scope>SUBCELLULAR LOCATION</scope>
    <scope>SUBUNIT</scope>
</reference>
<organism>
    <name type="scientific">Mus musculus</name>
    <name type="common">Mouse</name>
    <dbReference type="NCBI Taxonomy" id="10090"/>
    <lineage>
        <taxon>Eukaryota</taxon>
        <taxon>Metazoa</taxon>
        <taxon>Chordata</taxon>
        <taxon>Craniata</taxon>
        <taxon>Vertebrata</taxon>
        <taxon>Euteleostomi</taxon>
        <taxon>Mammalia</taxon>
        <taxon>Eutheria</taxon>
        <taxon>Euarchontoglires</taxon>
        <taxon>Glires</taxon>
        <taxon>Rodentia</taxon>
        <taxon>Myomorpha</taxon>
        <taxon>Muroidea</taxon>
        <taxon>Muridae</taxon>
        <taxon>Murinae</taxon>
        <taxon>Mus</taxon>
        <taxon>Mus</taxon>
    </lineage>
</organism>
<protein>
    <recommendedName>
        <fullName>NADH dehydrogenase [ubiquinone] 1 beta subcomplex subunit 8, mitochondrial</fullName>
    </recommendedName>
    <alternativeName>
        <fullName>Complex I-ASHI</fullName>
        <shortName>CI-ASHI</shortName>
    </alternativeName>
    <alternativeName>
        <fullName>NADH-ubiquinone oxidoreductase ASHI subunit</fullName>
    </alternativeName>
</protein>
<dbReference type="EMBL" id="AK010177">
    <property type="protein sequence ID" value="BAB26749.1"/>
    <property type="molecule type" value="mRNA"/>
</dbReference>
<dbReference type="EMBL" id="AK013516">
    <property type="protein sequence ID" value="BAB28893.1"/>
    <property type="molecule type" value="mRNA"/>
</dbReference>
<dbReference type="EMBL" id="BC043019">
    <property type="protein sequence ID" value="AAH43019.1"/>
    <property type="molecule type" value="mRNA"/>
</dbReference>
<dbReference type="CCDS" id="CCDS29851.1"/>
<dbReference type="RefSeq" id="NP_080337.1">
    <property type="nucleotide sequence ID" value="NM_026061.3"/>
</dbReference>
<dbReference type="PDB" id="6G2J">
    <property type="method" value="EM"/>
    <property type="resolution" value="3.30 A"/>
    <property type="chains" value="l=1-186"/>
</dbReference>
<dbReference type="PDB" id="6G72">
    <property type="method" value="EM"/>
    <property type="resolution" value="3.90 A"/>
    <property type="chains" value="l=1-186"/>
</dbReference>
<dbReference type="PDB" id="6ZR2">
    <property type="method" value="EM"/>
    <property type="resolution" value="3.10 A"/>
    <property type="chains" value="l=1-186"/>
</dbReference>
<dbReference type="PDB" id="6ZTQ">
    <property type="method" value="EM"/>
    <property type="resolution" value="3.00 A"/>
    <property type="chains" value="l=1-186"/>
</dbReference>
<dbReference type="PDB" id="7AK5">
    <property type="method" value="EM"/>
    <property type="resolution" value="3.17 A"/>
    <property type="chains" value="l=1-186"/>
</dbReference>
<dbReference type="PDB" id="7AK6">
    <property type="method" value="EM"/>
    <property type="resolution" value="3.82 A"/>
    <property type="chains" value="l=1-186"/>
</dbReference>
<dbReference type="PDB" id="7B93">
    <property type="method" value="EM"/>
    <property type="resolution" value="3.04 A"/>
    <property type="chains" value="l=1-186"/>
</dbReference>
<dbReference type="PDB" id="7PSA">
    <property type="method" value="EM"/>
    <property type="resolution" value="3.40 A"/>
    <property type="chains" value="l=1-186"/>
</dbReference>
<dbReference type="PDB" id="8C2S">
    <property type="method" value="EM"/>
    <property type="resolution" value="3.90 A"/>
    <property type="chains" value="l=1-186"/>
</dbReference>
<dbReference type="PDB" id="8CA3">
    <property type="method" value="EM"/>
    <property type="resolution" value="3.20 A"/>
    <property type="chains" value="l=1-186"/>
</dbReference>
<dbReference type="PDB" id="8CA5">
    <property type="method" value="EM"/>
    <property type="resolution" value="3.90 A"/>
    <property type="chains" value="l=1-186"/>
</dbReference>
<dbReference type="PDB" id="8IAO">
    <property type="method" value="EM"/>
    <property type="resolution" value="4.20 A"/>
    <property type="chains" value="l=1-186"/>
</dbReference>
<dbReference type="PDB" id="8IAQ">
    <property type="method" value="EM"/>
    <property type="resolution" value="3.40 A"/>
    <property type="chains" value="l=1-186"/>
</dbReference>
<dbReference type="PDB" id="8IB4">
    <property type="method" value="EM"/>
    <property type="resolution" value="4.30 A"/>
    <property type="chains" value="l=1-186"/>
</dbReference>
<dbReference type="PDB" id="8IB6">
    <property type="method" value="EM"/>
    <property type="resolution" value="3.30 A"/>
    <property type="chains" value="l=1-186"/>
</dbReference>
<dbReference type="PDB" id="8IB9">
    <property type="method" value="EM"/>
    <property type="resolution" value="4.30 A"/>
    <property type="chains" value="l=1-186"/>
</dbReference>
<dbReference type="PDB" id="8IBB">
    <property type="method" value="EM"/>
    <property type="resolution" value="3.30 A"/>
    <property type="chains" value="l=1-186"/>
</dbReference>
<dbReference type="PDB" id="8IBD">
    <property type="method" value="EM"/>
    <property type="resolution" value="4.20 A"/>
    <property type="chains" value="l=1-186"/>
</dbReference>
<dbReference type="PDB" id="8IBF">
    <property type="method" value="EM"/>
    <property type="resolution" value="3.30 A"/>
    <property type="chains" value="l=1-186"/>
</dbReference>
<dbReference type="PDB" id="8IC2">
    <property type="method" value="EM"/>
    <property type="resolution" value="6.30 A"/>
    <property type="chains" value="l=1-186"/>
</dbReference>
<dbReference type="PDB" id="8IC4">
    <property type="method" value="EM"/>
    <property type="resolution" value="3.20 A"/>
    <property type="chains" value="l=1-186"/>
</dbReference>
<dbReference type="PDB" id="8OLT">
    <property type="method" value="EM"/>
    <property type="resolution" value="2.84 A"/>
    <property type="chains" value="l=1-186"/>
</dbReference>
<dbReference type="PDB" id="8OM1">
    <property type="method" value="EM"/>
    <property type="resolution" value="2.39 A"/>
    <property type="chains" value="l=1-186"/>
</dbReference>
<dbReference type="PDB" id="8PW5">
    <property type="method" value="EM"/>
    <property type="resolution" value="3.60 A"/>
    <property type="chains" value="l1=1-186"/>
</dbReference>
<dbReference type="PDB" id="8PW6">
    <property type="method" value="EM"/>
    <property type="resolution" value="3.30 A"/>
    <property type="chains" value="l1=1-186"/>
</dbReference>
<dbReference type="PDB" id="8PW7">
    <property type="method" value="EM"/>
    <property type="resolution" value="3.50 A"/>
    <property type="chains" value="l1=1-186"/>
</dbReference>
<dbReference type="PDB" id="8RGP">
    <property type="method" value="EM"/>
    <property type="resolution" value="3.00 A"/>
    <property type="chains" value="l=1-186"/>
</dbReference>
<dbReference type="PDB" id="8RGQ">
    <property type="method" value="EM"/>
    <property type="resolution" value="3.00 A"/>
    <property type="chains" value="l=1-186"/>
</dbReference>
<dbReference type="PDB" id="8RGR">
    <property type="method" value="EM"/>
    <property type="resolution" value="2.90 A"/>
    <property type="chains" value="l=1-186"/>
</dbReference>
<dbReference type="PDB" id="8RGT">
    <property type="method" value="EM"/>
    <property type="resolution" value="3.10 A"/>
    <property type="chains" value="l=1-186"/>
</dbReference>
<dbReference type="PDB" id="8UCA">
    <property type="method" value="EM"/>
    <property type="resolution" value="3.70 A"/>
    <property type="chains" value="B8/b8=1-186"/>
</dbReference>
<dbReference type="PDBsum" id="6G2J"/>
<dbReference type="PDBsum" id="6G72"/>
<dbReference type="PDBsum" id="6ZR2"/>
<dbReference type="PDBsum" id="6ZTQ"/>
<dbReference type="PDBsum" id="7AK5"/>
<dbReference type="PDBsum" id="7AK6"/>
<dbReference type="PDBsum" id="7B93"/>
<dbReference type="PDBsum" id="7PSA"/>
<dbReference type="PDBsum" id="8C2S"/>
<dbReference type="PDBsum" id="8CA3"/>
<dbReference type="PDBsum" id="8CA5"/>
<dbReference type="PDBsum" id="8IAO"/>
<dbReference type="PDBsum" id="8IAQ"/>
<dbReference type="PDBsum" id="8IB4"/>
<dbReference type="PDBsum" id="8IB6"/>
<dbReference type="PDBsum" id="8IB9"/>
<dbReference type="PDBsum" id="8IBB"/>
<dbReference type="PDBsum" id="8IBD"/>
<dbReference type="PDBsum" id="8IBF"/>
<dbReference type="PDBsum" id="8IC2"/>
<dbReference type="PDBsum" id="8IC4"/>
<dbReference type="PDBsum" id="8OLT"/>
<dbReference type="PDBsum" id="8OM1"/>
<dbReference type="PDBsum" id="8PW5"/>
<dbReference type="PDBsum" id="8PW6"/>
<dbReference type="PDBsum" id="8PW7"/>
<dbReference type="PDBsum" id="8RGP"/>
<dbReference type="PDBsum" id="8RGQ"/>
<dbReference type="PDBsum" id="8RGR"/>
<dbReference type="PDBsum" id="8RGT"/>
<dbReference type="PDBsum" id="8UCA"/>
<dbReference type="EMDB" id="EMD-11377"/>
<dbReference type="EMDB" id="EMD-11424"/>
<dbReference type="EMDB" id="EMD-11810"/>
<dbReference type="EMDB" id="EMD-11811"/>
<dbReference type="EMDB" id="EMD-12095"/>
<dbReference type="EMDB" id="EMD-13611"/>
<dbReference type="EMDB" id="EMD-16398"/>
<dbReference type="EMDB" id="EMD-16516"/>
<dbReference type="EMDB" id="EMD-16518"/>
<dbReference type="EMDB" id="EMD-16962"/>
<dbReference type="EMDB" id="EMD-16965"/>
<dbReference type="EMDB" id="EMD-17989"/>
<dbReference type="EMDB" id="EMD-17990"/>
<dbReference type="EMDB" id="EMD-17991"/>
<dbReference type="EMDB" id="EMD-19145"/>
<dbReference type="EMDB" id="EMD-19146"/>
<dbReference type="EMDB" id="EMD-19147"/>
<dbReference type="EMDB" id="EMD-19148"/>
<dbReference type="EMDB" id="EMD-35313"/>
<dbReference type="EMDB" id="EMD-35315"/>
<dbReference type="EMDB" id="EMD-35331"/>
<dbReference type="EMDB" id="EMD-35333"/>
<dbReference type="EMDB" id="EMD-35336"/>
<dbReference type="EMDB" id="EMD-35338"/>
<dbReference type="EMDB" id="EMD-35340"/>
<dbReference type="EMDB" id="EMD-35342"/>
<dbReference type="EMDB" id="EMD-35352"/>
<dbReference type="EMDB" id="EMD-35354"/>
<dbReference type="EMDB" id="EMD-42122"/>
<dbReference type="EMDB" id="EMD-4345"/>
<dbReference type="EMDB" id="EMD-4356"/>
<dbReference type="SMR" id="Q9D6J5"/>
<dbReference type="BioGRID" id="212057">
    <property type="interactions" value="11"/>
</dbReference>
<dbReference type="ComplexPortal" id="CPX-266">
    <property type="entry name" value="Mitochondrial respiratory chain complex I"/>
</dbReference>
<dbReference type="CORUM" id="Q9D6J5"/>
<dbReference type="FunCoup" id="Q9D6J5">
    <property type="interactions" value="1355"/>
</dbReference>
<dbReference type="IntAct" id="Q9D6J5">
    <property type="interactions" value="4"/>
</dbReference>
<dbReference type="STRING" id="10090.ENSMUSP00000026222"/>
<dbReference type="GlyGen" id="Q9D6J5">
    <property type="glycosylation" value="2 sites, 1 O-linked glycan (1 site)"/>
</dbReference>
<dbReference type="iPTMnet" id="Q9D6J5"/>
<dbReference type="PhosphoSitePlus" id="Q9D6J5"/>
<dbReference type="SwissPalm" id="Q9D6J5"/>
<dbReference type="jPOST" id="Q9D6J5"/>
<dbReference type="PaxDb" id="10090-ENSMUSP00000026222"/>
<dbReference type="PeptideAtlas" id="Q9D6J5"/>
<dbReference type="ProteomicsDB" id="286167"/>
<dbReference type="Pumba" id="Q9D6J5"/>
<dbReference type="DNASU" id="67264"/>
<dbReference type="Ensembl" id="ENSMUST00000026222.11">
    <property type="protein sequence ID" value="ENSMUSP00000026222.5"/>
    <property type="gene ID" value="ENSMUSG00000025204.11"/>
</dbReference>
<dbReference type="GeneID" id="67264"/>
<dbReference type="KEGG" id="mmu:67264"/>
<dbReference type="UCSC" id="uc008hpw.1">
    <property type="organism name" value="mouse"/>
</dbReference>
<dbReference type="AGR" id="MGI:1914514"/>
<dbReference type="CTD" id="4714"/>
<dbReference type="MGI" id="MGI:1914514">
    <property type="gene designation" value="Ndufb8"/>
</dbReference>
<dbReference type="VEuPathDB" id="HostDB:ENSMUSG00000025204"/>
<dbReference type="eggNOG" id="KOG4040">
    <property type="taxonomic scope" value="Eukaryota"/>
</dbReference>
<dbReference type="GeneTree" id="ENSGT00390000000628"/>
<dbReference type="HOGENOM" id="CLU_108654_1_0_1"/>
<dbReference type="InParanoid" id="Q9D6J5"/>
<dbReference type="OMA" id="WHTMRNH"/>
<dbReference type="OrthoDB" id="2014058at2759"/>
<dbReference type="PhylomeDB" id="Q9D6J5"/>
<dbReference type="TreeFam" id="TF317319"/>
<dbReference type="Reactome" id="R-MMU-1268020">
    <property type="pathway name" value="Mitochondrial protein import"/>
</dbReference>
<dbReference type="Reactome" id="R-MMU-611105">
    <property type="pathway name" value="Respiratory electron transport"/>
</dbReference>
<dbReference type="Reactome" id="R-MMU-6799198">
    <property type="pathway name" value="Complex I biogenesis"/>
</dbReference>
<dbReference type="BioGRID-ORCS" id="67264">
    <property type="hits" value="24 hits in 78 CRISPR screens"/>
</dbReference>
<dbReference type="CD-CODE" id="CE726F99">
    <property type="entry name" value="Postsynaptic density"/>
</dbReference>
<dbReference type="ChiTaRS" id="Ndufb8">
    <property type="organism name" value="mouse"/>
</dbReference>
<dbReference type="PRO" id="PR:Q9D6J5"/>
<dbReference type="Proteomes" id="UP000000589">
    <property type="component" value="Chromosome 19"/>
</dbReference>
<dbReference type="RNAct" id="Q9D6J5">
    <property type="molecule type" value="protein"/>
</dbReference>
<dbReference type="Bgee" id="ENSMUSG00000025204">
    <property type="expression patterns" value="Expressed in right kidney and 270 other cell types or tissues"/>
</dbReference>
<dbReference type="ExpressionAtlas" id="Q9D6J5">
    <property type="expression patterns" value="baseline and differential"/>
</dbReference>
<dbReference type="GO" id="GO:0005743">
    <property type="term" value="C:mitochondrial inner membrane"/>
    <property type="evidence" value="ECO:0000314"/>
    <property type="project" value="UniProtKB"/>
</dbReference>
<dbReference type="GO" id="GO:0005739">
    <property type="term" value="C:mitochondrion"/>
    <property type="evidence" value="ECO:0000314"/>
    <property type="project" value="MGI"/>
</dbReference>
<dbReference type="GO" id="GO:0045271">
    <property type="term" value="C:respiratory chain complex I"/>
    <property type="evidence" value="ECO:0000314"/>
    <property type="project" value="UniProtKB"/>
</dbReference>
<dbReference type="GO" id="GO:0009060">
    <property type="term" value="P:aerobic respiration"/>
    <property type="evidence" value="ECO:0000303"/>
    <property type="project" value="ComplexPortal"/>
</dbReference>
<dbReference type="GO" id="GO:0006120">
    <property type="term" value="P:mitochondrial electron transport, NADH to ubiquinone"/>
    <property type="evidence" value="ECO:0007669"/>
    <property type="project" value="InterPro"/>
</dbReference>
<dbReference type="GO" id="GO:0042776">
    <property type="term" value="P:proton motive force-driven mitochondrial ATP synthesis"/>
    <property type="evidence" value="ECO:0000303"/>
    <property type="project" value="ComplexPortal"/>
</dbReference>
<dbReference type="InterPro" id="IPR008699">
    <property type="entry name" value="NDUFB8"/>
</dbReference>
<dbReference type="InterPro" id="IPR016551">
    <property type="entry name" value="Ndufb8_metazoa"/>
</dbReference>
<dbReference type="PANTHER" id="PTHR12840:SF1">
    <property type="entry name" value="NADH DEHYDROGENASE [UBIQUINONE] 1 BETA SUBCOMPLEX SUBUNIT 8, MITOCHONDRIAL"/>
    <property type="match status" value="1"/>
</dbReference>
<dbReference type="PANTHER" id="PTHR12840">
    <property type="entry name" value="NADH-UBIQUINONE OXIDOREDUCTASE ASHI SUBUNIT"/>
    <property type="match status" value="1"/>
</dbReference>
<dbReference type="Pfam" id="PF05821">
    <property type="entry name" value="NDUF_B8"/>
    <property type="match status" value="1"/>
</dbReference>
<dbReference type="PIRSF" id="PIRSF009288">
    <property type="entry name" value="NDUB8"/>
    <property type="match status" value="1"/>
</dbReference>
<feature type="transit peptide" description="Mitochondrion" evidence="1">
    <location>
        <begin position="1"/>
        <end position="28"/>
    </location>
</feature>
<feature type="chain" id="PRO_0000020047" description="NADH dehydrogenase [ubiquinone] 1 beta subcomplex subunit 8, mitochondrial">
    <location>
        <begin position="29"/>
        <end position="186"/>
    </location>
</feature>
<feature type="transmembrane region" description="Helical" evidence="2">
    <location>
        <begin position="133"/>
        <end position="153"/>
    </location>
</feature>
<feature type="sequence conflict" description="In Ref. 1; BAB26749." evidence="4" ref="1">
    <original>I</original>
    <variation>V</variation>
    <location>
        <position position="105"/>
    </location>
</feature>
<feature type="helix" evidence="7">
    <location>
        <begin position="34"/>
        <end position="36"/>
    </location>
</feature>
<feature type="helix" evidence="7">
    <location>
        <begin position="45"/>
        <end position="54"/>
    </location>
</feature>
<feature type="turn" evidence="7">
    <location>
        <begin position="59"/>
        <end position="61"/>
    </location>
</feature>
<feature type="strand" evidence="7">
    <location>
        <begin position="67"/>
        <end position="71"/>
    </location>
</feature>
<feature type="helix" evidence="7">
    <location>
        <begin position="83"/>
        <end position="85"/>
    </location>
</feature>
<feature type="strand" evidence="7">
    <location>
        <begin position="88"/>
        <end position="90"/>
    </location>
</feature>
<feature type="turn" evidence="7">
    <location>
        <begin position="95"/>
        <end position="98"/>
    </location>
</feature>
<feature type="strand" evidence="8">
    <location>
        <begin position="101"/>
        <end position="103"/>
    </location>
</feature>
<feature type="helix" evidence="7">
    <location>
        <begin position="109"/>
        <end position="112"/>
    </location>
</feature>
<feature type="turn" evidence="6">
    <location>
        <begin position="114"/>
        <end position="116"/>
    </location>
</feature>
<feature type="helix" evidence="7">
    <location>
        <begin position="126"/>
        <end position="149"/>
    </location>
</feature>
<feature type="helix" evidence="7">
    <location>
        <begin position="162"/>
        <end position="166"/>
    </location>
</feature>
<feature type="turn" evidence="7">
    <location>
        <begin position="167"/>
        <end position="171"/>
    </location>
</feature>
<feature type="strand" evidence="7">
    <location>
        <begin position="174"/>
        <end position="176"/>
    </location>
</feature>
<evidence type="ECO:0000250" key="1"/>
<evidence type="ECO:0000255" key="2"/>
<evidence type="ECO:0000269" key="3">
    <source>
    </source>
</evidence>
<evidence type="ECO:0000305" key="4"/>
<evidence type="ECO:0007744" key="5">
    <source>
        <dbReference type="PDB" id="8PW5"/>
    </source>
</evidence>
<evidence type="ECO:0007829" key="6">
    <source>
        <dbReference type="PDB" id="6ZTQ"/>
    </source>
</evidence>
<evidence type="ECO:0007829" key="7">
    <source>
        <dbReference type="PDB" id="8OM1"/>
    </source>
</evidence>
<evidence type="ECO:0007829" key="8">
    <source>
        <dbReference type="PDB" id="8RGR"/>
    </source>
</evidence>
<sequence length="186" mass="21876">MAAARAAALGVRWLQRTTRGVVPLEARRAFHMTKDMLPGSYPRTPEERAAAAKKYNMRVEDYEPYPDDGMGYGDYPMLPNRSQHERDPWYQWDHSELRMNWGEPIHWDLDMYIRNRVDTSPTPVSWDVMCKHLFGFVAFMVFMFWVGHVFPSYQPVGPKQYPYNNLYLERGGDPTKEPEPVVHYDI</sequence>
<proteinExistence type="evidence at protein level"/>
<keyword id="KW-0002">3D-structure</keyword>
<keyword id="KW-0903">Direct protein sequencing</keyword>
<keyword id="KW-0249">Electron transport</keyword>
<keyword id="KW-0472">Membrane</keyword>
<keyword id="KW-0496">Mitochondrion</keyword>
<keyword id="KW-0999">Mitochondrion inner membrane</keyword>
<keyword id="KW-1185">Reference proteome</keyword>
<keyword id="KW-0679">Respiratory chain</keyword>
<keyword id="KW-0809">Transit peptide</keyword>
<keyword id="KW-0812">Transmembrane</keyword>
<keyword id="KW-1133">Transmembrane helix</keyword>
<keyword id="KW-0813">Transport</keyword>
<gene>
    <name type="primary">Ndufb8</name>
</gene>
<accession>Q9D6J5</accession>
<accession>Q9D6M7</accession>
<name>NDUB8_MOUSE</name>